<name>EFG_CAMLR</name>
<comment type="function">
    <text evidence="1">Catalyzes the GTP-dependent ribosomal translocation step during translation elongation. During this step, the ribosome changes from the pre-translocational (PRE) to the post-translocational (POST) state as the newly formed A-site-bound peptidyl-tRNA and P-site-bound deacylated tRNA move to the P and E sites, respectively. Catalyzes the coordinated movement of the two tRNA molecules, the mRNA and conformational changes in the ribosome.</text>
</comment>
<comment type="subcellular location">
    <subcellularLocation>
        <location evidence="1">Cytoplasm</location>
    </subcellularLocation>
</comment>
<comment type="similarity">
    <text evidence="1">Belongs to the TRAFAC class translation factor GTPase superfamily. Classic translation factor GTPase family. EF-G/EF-2 subfamily.</text>
</comment>
<gene>
    <name evidence="1" type="primary">fusA</name>
    <name type="ordered locus">Cla_0453</name>
</gene>
<sequence length="691" mass="76775">MSRTTPLKRVRNIGIAAHIDAGKTTTSERILFFTGMSHKIGEVHDGAATMDWMEQEKERGITITSAATTCFWKNHQINLIDTPGHVDFTIEVERSMRVLDGAVAVFCSVGGVQPQSETVWRQANKYGVPRIVFVNKMDRIGANFFNVEEQIKNRLKGNPVPLQIPIGAEDNFKGVIDLITMKALVWEDESKPTDYVEKEIPAELKEKAEEYRVKMIEAVSETSDELMEKYLGGEELTQDEIKAGIKAGCLSLSMVPMLCGTAFKNKGVQPLLDAVVAYLPAPDEVANIKGEYEDGTEVSVKSTDDGEFAALAFKIMTDPFVGQLTFVRVYRGSLESGSYAYNSTKDKKERIGRLLKMHSNKREEIKTLYAGEIGAVVGLKDTLTGDTLASEKDKVILERMDFPDPVISVAVEPKTKADQEKMSIALNKLAQEDPSFRVSTDEESGQTIISGMGELHLEIIVDRMLREFKVEAEVGQPQVAYRETIRKTVEQEYKYAKQSGGRGQYGHVFLRLEPLEPGSGYEFVNDIKGGVIPKEYIPAVDKGVQEALQNGVLAGYPVEDVKVTVYDGSYHEVDSSEMAFKLAASMGFKEGARKAGAVILEPMMKVEVETPEEYMGDVIGDLNKRRGQVNSMDERGGNKIITAFCPLAEMFGYSTDLRSQTQGRATYSMEFDHYDEVPKNVSEEIIKKRNG</sequence>
<organism>
    <name type="scientific">Campylobacter lari (strain RM2100 / D67 / ATCC BAA-1060)</name>
    <dbReference type="NCBI Taxonomy" id="306263"/>
    <lineage>
        <taxon>Bacteria</taxon>
        <taxon>Pseudomonadati</taxon>
        <taxon>Campylobacterota</taxon>
        <taxon>Epsilonproteobacteria</taxon>
        <taxon>Campylobacterales</taxon>
        <taxon>Campylobacteraceae</taxon>
        <taxon>Campylobacter</taxon>
    </lineage>
</organism>
<accession>B9KFH1</accession>
<keyword id="KW-0963">Cytoplasm</keyword>
<keyword id="KW-0251">Elongation factor</keyword>
<keyword id="KW-0342">GTP-binding</keyword>
<keyword id="KW-0547">Nucleotide-binding</keyword>
<keyword id="KW-0648">Protein biosynthesis</keyword>
<keyword id="KW-1185">Reference proteome</keyword>
<evidence type="ECO:0000255" key="1">
    <source>
        <dbReference type="HAMAP-Rule" id="MF_00054"/>
    </source>
</evidence>
<protein>
    <recommendedName>
        <fullName evidence="1">Elongation factor G</fullName>
        <shortName evidence="1">EF-G</shortName>
    </recommendedName>
</protein>
<proteinExistence type="inferred from homology"/>
<feature type="chain" id="PRO_1000201445" description="Elongation factor G">
    <location>
        <begin position="1"/>
        <end position="691"/>
    </location>
</feature>
<feature type="domain" description="tr-type G">
    <location>
        <begin position="8"/>
        <end position="283"/>
    </location>
</feature>
<feature type="binding site" evidence="1">
    <location>
        <begin position="17"/>
        <end position="24"/>
    </location>
    <ligand>
        <name>GTP</name>
        <dbReference type="ChEBI" id="CHEBI:37565"/>
    </ligand>
</feature>
<feature type="binding site" evidence="1">
    <location>
        <begin position="81"/>
        <end position="85"/>
    </location>
    <ligand>
        <name>GTP</name>
        <dbReference type="ChEBI" id="CHEBI:37565"/>
    </ligand>
</feature>
<feature type="binding site" evidence="1">
    <location>
        <begin position="135"/>
        <end position="138"/>
    </location>
    <ligand>
        <name>GTP</name>
        <dbReference type="ChEBI" id="CHEBI:37565"/>
    </ligand>
</feature>
<dbReference type="EMBL" id="CP000932">
    <property type="protein sequence ID" value="ACM63806.1"/>
    <property type="molecule type" value="Genomic_DNA"/>
</dbReference>
<dbReference type="RefSeq" id="WP_012661189.1">
    <property type="nucleotide sequence ID" value="NC_012039.1"/>
</dbReference>
<dbReference type="SMR" id="B9KFH1"/>
<dbReference type="STRING" id="306263.Cla_0453"/>
<dbReference type="KEGG" id="cla:CLA_0453"/>
<dbReference type="PATRIC" id="fig|306263.5.peg.450"/>
<dbReference type="eggNOG" id="COG0480">
    <property type="taxonomic scope" value="Bacteria"/>
</dbReference>
<dbReference type="HOGENOM" id="CLU_002794_4_1_7"/>
<dbReference type="Proteomes" id="UP000007727">
    <property type="component" value="Chromosome"/>
</dbReference>
<dbReference type="GO" id="GO:0005737">
    <property type="term" value="C:cytoplasm"/>
    <property type="evidence" value="ECO:0007669"/>
    <property type="project" value="UniProtKB-SubCell"/>
</dbReference>
<dbReference type="GO" id="GO:0005525">
    <property type="term" value="F:GTP binding"/>
    <property type="evidence" value="ECO:0007669"/>
    <property type="project" value="UniProtKB-UniRule"/>
</dbReference>
<dbReference type="GO" id="GO:0003924">
    <property type="term" value="F:GTPase activity"/>
    <property type="evidence" value="ECO:0007669"/>
    <property type="project" value="InterPro"/>
</dbReference>
<dbReference type="GO" id="GO:0003746">
    <property type="term" value="F:translation elongation factor activity"/>
    <property type="evidence" value="ECO:0007669"/>
    <property type="project" value="UniProtKB-UniRule"/>
</dbReference>
<dbReference type="GO" id="GO:0032790">
    <property type="term" value="P:ribosome disassembly"/>
    <property type="evidence" value="ECO:0007669"/>
    <property type="project" value="TreeGrafter"/>
</dbReference>
<dbReference type="CDD" id="cd01886">
    <property type="entry name" value="EF-G"/>
    <property type="match status" value="1"/>
</dbReference>
<dbReference type="CDD" id="cd16262">
    <property type="entry name" value="EFG_III"/>
    <property type="match status" value="1"/>
</dbReference>
<dbReference type="CDD" id="cd01434">
    <property type="entry name" value="EFG_mtEFG1_IV"/>
    <property type="match status" value="1"/>
</dbReference>
<dbReference type="CDD" id="cd03713">
    <property type="entry name" value="EFG_mtEFG_C"/>
    <property type="match status" value="1"/>
</dbReference>
<dbReference type="CDD" id="cd04088">
    <property type="entry name" value="EFG_mtEFG_II"/>
    <property type="match status" value="1"/>
</dbReference>
<dbReference type="FunFam" id="2.40.30.10:FF:000006">
    <property type="entry name" value="Elongation factor G"/>
    <property type="match status" value="1"/>
</dbReference>
<dbReference type="FunFam" id="3.30.230.10:FF:000003">
    <property type="entry name" value="Elongation factor G"/>
    <property type="match status" value="1"/>
</dbReference>
<dbReference type="FunFam" id="3.30.70.240:FF:000001">
    <property type="entry name" value="Elongation factor G"/>
    <property type="match status" value="1"/>
</dbReference>
<dbReference type="FunFam" id="3.30.70.870:FF:000001">
    <property type="entry name" value="Elongation factor G"/>
    <property type="match status" value="1"/>
</dbReference>
<dbReference type="FunFam" id="3.40.50.300:FF:000029">
    <property type="entry name" value="Elongation factor G"/>
    <property type="match status" value="1"/>
</dbReference>
<dbReference type="Gene3D" id="3.30.230.10">
    <property type="match status" value="1"/>
</dbReference>
<dbReference type="Gene3D" id="3.30.70.240">
    <property type="match status" value="1"/>
</dbReference>
<dbReference type="Gene3D" id="3.30.70.870">
    <property type="entry name" value="Elongation Factor G (Translational Gtpase), domain 3"/>
    <property type="match status" value="1"/>
</dbReference>
<dbReference type="Gene3D" id="3.40.50.300">
    <property type="entry name" value="P-loop containing nucleotide triphosphate hydrolases"/>
    <property type="match status" value="1"/>
</dbReference>
<dbReference type="Gene3D" id="2.40.30.10">
    <property type="entry name" value="Translation factors"/>
    <property type="match status" value="1"/>
</dbReference>
<dbReference type="HAMAP" id="MF_00054_B">
    <property type="entry name" value="EF_G_EF_2_B"/>
    <property type="match status" value="1"/>
</dbReference>
<dbReference type="InterPro" id="IPR053905">
    <property type="entry name" value="EF-G-like_DII"/>
</dbReference>
<dbReference type="InterPro" id="IPR041095">
    <property type="entry name" value="EFG_II"/>
</dbReference>
<dbReference type="InterPro" id="IPR009022">
    <property type="entry name" value="EFG_III"/>
</dbReference>
<dbReference type="InterPro" id="IPR035647">
    <property type="entry name" value="EFG_III/V"/>
</dbReference>
<dbReference type="InterPro" id="IPR047872">
    <property type="entry name" value="EFG_IV"/>
</dbReference>
<dbReference type="InterPro" id="IPR035649">
    <property type="entry name" value="EFG_V"/>
</dbReference>
<dbReference type="InterPro" id="IPR000640">
    <property type="entry name" value="EFG_V-like"/>
</dbReference>
<dbReference type="InterPro" id="IPR031157">
    <property type="entry name" value="G_TR_CS"/>
</dbReference>
<dbReference type="InterPro" id="IPR027417">
    <property type="entry name" value="P-loop_NTPase"/>
</dbReference>
<dbReference type="InterPro" id="IPR020568">
    <property type="entry name" value="Ribosomal_Su5_D2-typ_SF"/>
</dbReference>
<dbReference type="InterPro" id="IPR014721">
    <property type="entry name" value="Ribsml_uS5_D2-typ_fold_subgr"/>
</dbReference>
<dbReference type="InterPro" id="IPR005225">
    <property type="entry name" value="Small_GTP-bd"/>
</dbReference>
<dbReference type="InterPro" id="IPR000795">
    <property type="entry name" value="T_Tr_GTP-bd_dom"/>
</dbReference>
<dbReference type="InterPro" id="IPR009000">
    <property type="entry name" value="Transl_B-barrel_sf"/>
</dbReference>
<dbReference type="InterPro" id="IPR004540">
    <property type="entry name" value="Transl_elong_EFG/EF2"/>
</dbReference>
<dbReference type="InterPro" id="IPR005517">
    <property type="entry name" value="Transl_elong_EFG/EF2_IV"/>
</dbReference>
<dbReference type="NCBIfam" id="TIGR00484">
    <property type="entry name" value="EF-G"/>
    <property type="match status" value="1"/>
</dbReference>
<dbReference type="NCBIfam" id="NF009379">
    <property type="entry name" value="PRK12740.1-3"/>
    <property type="match status" value="1"/>
</dbReference>
<dbReference type="NCBIfam" id="NF009381">
    <property type="entry name" value="PRK12740.1-5"/>
    <property type="match status" value="1"/>
</dbReference>
<dbReference type="NCBIfam" id="NF009891">
    <property type="entry name" value="PRK13351.1-1"/>
    <property type="match status" value="1"/>
</dbReference>
<dbReference type="NCBIfam" id="TIGR00231">
    <property type="entry name" value="small_GTP"/>
    <property type="match status" value="1"/>
</dbReference>
<dbReference type="PANTHER" id="PTHR43261:SF1">
    <property type="entry name" value="RIBOSOME-RELEASING FACTOR 2, MITOCHONDRIAL"/>
    <property type="match status" value="1"/>
</dbReference>
<dbReference type="PANTHER" id="PTHR43261">
    <property type="entry name" value="TRANSLATION ELONGATION FACTOR G-RELATED"/>
    <property type="match status" value="1"/>
</dbReference>
<dbReference type="Pfam" id="PF22042">
    <property type="entry name" value="EF-G_D2"/>
    <property type="match status" value="1"/>
</dbReference>
<dbReference type="Pfam" id="PF00679">
    <property type="entry name" value="EFG_C"/>
    <property type="match status" value="1"/>
</dbReference>
<dbReference type="Pfam" id="PF14492">
    <property type="entry name" value="EFG_III"/>
    <property type="match status" value="1"/>
</dbReference>
<dbReference type="Pfam" id="PF03764">
    <property type="entry name" value="EFG_IV"/>
    <property type="match status" value="1"/>
</dbReference>
<dbReference type="Pfam" id="PF00009">
    <property type="entry name" value="GTP_EFTU"/>
    <property type="match status" value="1"/>
</dbReference>
<dbReference type="PRINTS" id="PR00315">
    <property type="entry name" value="ELONGATNFCT"/>
</dbReference>
<dbReference type="SMART" id="SM00838">
    <property type="entry name" value="EFG_C"/>
    <property type="match status" value="1"/>
</dbReference>
<dbReference type="SMART" id="SM00889">
    <property type="entry name" value="EFG_IV"/>
    <property type="match status" value="1"/>
</dbReference>
<dbReference type="SUPFAM" id="SSF54980">
    <property type="entry name" value="EF-G C-terminal domain-like"/>
    <property type="match status" value="2"/>
</dbReference>
<dbReference type="SUPFAM" id="SSF52540">
    <property type="entry name" value="P-loop containing nucleoside triphosphate hydrolases"/>
    <property type="match status" value="1"/>
</dbReference>
<dbReference type="SUPFAM" id="SSF54211">
    <property type="entry name" value="Ribosomal protein S5 domain 2-like"/>
    <property type="match status" value="1"/>
</dbReference>
<dbReference type="SUPFAM" id="SSF50447">
    <property type="entry name" value="Translation proteins"/>
    <property type="match status" value="1"/>
</dbReference>
<dbReference type="PROSITE" id="PS00301">
    <property type="entry name" value="G_TR_1"/>
    <property type="match status" value="1"/>
</dbReference>
<dbReference type="PROSITE" id="PS51722">
    <property type="entry name" value="G_TR_2"/>
    <property type="match status" value="1"/>
</dbReference>
<reference key="1">
    <citation type="journal article" date="2008" name="Foodborne Pathog. Dis.">
        <title>The complete genome sequence and analysis of the human pathogen Campylobacter lari.</title>
        <authorList>
            <person name="Miller W.G."/>
            <person name="Wang G."/>
            <person name="Binnewies T.T."/>
            <person name="Parker C.T."/>
        </authorList>
    </citation>
    <scope>NUCLEOTIDE SEQUENCE [LARGE SCALE GENOMIC DNA]</scope>
    <source>
        <strain>RM2100 / D67 / ATCC BAA-1060</strain>
    </source>
</reference>